<keyword id="KW-0963">Cytoplasm</keyword>
<keyword id="KW-0324">Glycolysis</keyword>
<keyword id="KW-0456">Lyase</keyword>
<keyword id="KW-0460">Magnesium</keyword>
<keyword id="KW-0479">Metal-binding</keyword>
<keyword id="KW-1185">Reference proteome</keyword>
<keyword id="KW-0964">Secreted</keyword>
<evidence type="ECO:0000255" key="1">
    <source>
        <dbReference type="HAMAP-Rule" id="MF_00318"/>
    </source>
</evidence>
<proteinExistence type="inferred from homology"/>
<name>ENO_NOSP7</name>
<feature type="chain" id="PRO_1000115892" description="Enolase">
    <location>
        <begin position="1"/>
        <end position="429"/>
    </location>
</feature>
<feature type="active site" description="Proton donor" evidence="1">
    <location>
        <position position="210"/>
    </location>
</feature>
<feature type="active site" description="Proton acceptor" evidence="1">
    <location>
        <position position="340"/>
    </location>
</feature>
<feature type="binding site" evidence="1">
    <location>
        <position position="168"/>
    </location>
    <ligand>
        <name>(2R)-2-phosphoglycerate</name>
        <dbReference type="ChEBI" id="CHEBI:58289"/>
    </ligand>
</feature>
<feature type="binding site" evidence="1">
    <location>
        <position position="247"/>
    </location>
    <ligand>
        <name>Mg(2+)</name>
        <dbReference type="ChEBI" id="CHEBI:18420"/>
    </ligand>
</feature>
<feature type="binding site" evidence="1">
    <location>
        <position position="288"/>
    </location>
    <ligand>
        <name>Mg(2+)</name>
        <dbReference type="ChEBI" id="CHEBI:18420"/>
    </ligand>
</feature>
<feature type="binding site" evidence="1">
    <location>
        <position position="315"/>
    </location>
    <ligand>
        <name>Mg(2+)</name>
        <dbReference type="ChEBI" id="CHEBI:18420"/>
    </ligand>
</feature>
<feature type="binding site" evidence="1">
    <location>
        <position position="340"/>
    </location>
    <ligand>
        <name>(2R)-2-phosphoglycerate</name>
        <dbReference type="ChEBI" id="CHEBI:58289"/>
    </ligand>
</feature>
<feature type="binding site" evidence="1">
    <location>
        <position position="369"/>
    </location>
    <ligand>
        <name>(2R)-2-phosphoglycerate</name>
        <dbReference type="ChEBI" id="CHEBI:58289"/>
    </ligand>
</feature>
<feature type="binding site" evidence="1">
    <location>
        <position position="370"/>
    </location>
    <ligand>
        <name>(2R)-2-phosphoglycerate</name>
        <dbReference type="ChEBI" id="CHEBI:58289"/>
    </ligand>
</feature>
<feature type="binding site" evidence="1">
    <location>
        <position position="391"/>
    </location>
    <ligand>
        <name>(2R)-2-phosphoglycerate</name>
        <dbReference type="ChEBI" id="CHEBI:58289"/>
    </ligand>
</feature>
<organism>
    <name type="scientific">Nostoc punctiforme (strain ATCC 29133 / PCC 73102)</name>
    <dbReference type="NCBI Taxonomy" id="63737"/>
    <lineage>
        <taxon>Bacteria</taxon>
        <taxon>Bacillati</taxon>
        <taxon>Cyanobacteriota</taxon>
        <taxon>Cyanophyceae</taxon>
        <taxon>Nostocales</taxon>
        <taxon>Nostocaceae</taxon>
        <taxon>Nostoc</taxon>
    </lineage>
</organism>
<protein>
    <recommendedName>
        <fullName evidence="1">Enolase</fullName>
        <ecNumber evidence="1">4.2.1.11</ecNumber>
    </recommendedName>
    <alternativeName>
        <fullName evidence="1">2-phospho-D-glycerate hydro-lyase</fullName>
    </alternativeName>
    <alternativeName>
        <fullName evidence="1">2-phosphoglycerate dehydratase</fullName>
    </alternativeName>
</protein>
<comment type="function">
    <text evidence="1">Catalyzes the reversible conversion of 2-phosphoglycerate (2-PG) into phosphoenolpyruvate (PEP). It is essential for the degradation of carbohydrates via glycolysis.</text>
</comment>
<comment type="catalytic activity">
    <reaction evidence="1">
        <text>(2R)-2-phosphoglycerate = phosphoenolpyruvate + H2O</text>
        <dbReference type="Rhea" id="RHEA:10164"/>
        <dbReference type="ChEBI" id="CHEBI:15377"/>
        <dbReference type="ChEBI" id="CHEBI:58289"/>
        <dbReference type="ChEBI" id="CHEBI:58702"/>
        <dbReference type="EC" id="4.2.1.11"/>
    </reaction>
</comment>
<comment type="cofactor">
    <cofactor evidence="1">
        <name>Mg(2+)</name>
        <dbReference type="ChEBI" id="CHEBI:18420"/>
    </cofactor>
    <text evidence="1">Binds a second Mg(2+) ion via substrate during catalysis.</text>
</comment>
<comment type="pathway">
    <text evidence="1">Carbohydrate degradation; glycolysis; pyruvate from D-glyceraldehyde 3-phosphate: step 4/5.</text>
</comment>
<comment type="subcellular location">
    <subcellularLocation>
        <location evidence="1">Cytoplasm</location>
    </subcellularLocation>
    <subcellularLocation>
        <location evidence="1">Secreted</location>
    </subcellularLocation>
    <subcellularLocation>
        <location evidence="1">Cell surface</location>
    </subcellularLocation>
    <text evidence="1">Fractions of enolase are present in both the cytoplasm and on the cell surface.</text>
</comment>
<comment type="similarity">
    <text evidence="1">Belongs to the enolase family.</text>
</comment>
<gene>
    <name evidence="1" type="primary">eno</name>
    <name type="ordered locus">Npun_R3508</name>
</gene>
<accession>B2J1R2</accession>
<reference key="1">
    <citation type="journal article" date="2013" name="Plant Physiol.">
        <title>A Nostoc punctiforme Sugar Transporter Necessary to Establish a Cyanobacterium-Plant Symbiosis.</title>
        <authorList>
            <person name="Ekman M."/>
            <person name="Picossi S."/>
            <person name="Campbell E.L."/>
            <person name="Meeks J.C."/>
            <person name="Flores E."/>
        </authorList>
    </citation>
    <scope>NUCLEOTIDE SEQUENCE [LARGE SCALE GENOMIC DNA]</scope>
    <source>
        <strain>ATCC 29133 / PCC 73102</strain>
    </source>
</reference>
<dbReference type="EC" id="4.2.1.11" evidence="1"/>
<dbReference type="EMBL" id="CP001037">
    <property type="protein sequence ID" value="ACC81914.1"/>
    <property type="molecule type" value="Genomic_DNA"/>
</dbReference>
<dbReference type="RefSeq" id="WP_012409888.1">
    <property type="nucleotide sequence ID" value="NC_010628.1"/>
</dbReference>
<dbReference type="SMR" id="B2J1R2"/>
<dbReference type="STRING" id="63737.Npun_R3508"/>
<dbReference type="EnsemblBacteria" id="ACC81914">
    <property type="protein sequence ID" value="ACC81914"/>
    <property type="gene ID" value="Npun_R3508"/>
</dbReference>
<dbReference type="KEGG" id="npu:Npun_R3508"/>
<dbReference type="eggNOG" id="COG0148">
    <property type="taxonomic scope" value="Bacteria"/>
</dbReference>
<dbReference type="HOGENOM" id="CLU_031223_2_1_3"/>
<dbReference type="OrthoDB" id="9804716at2"/>
<dbReference type="PhylomeDB" id="B2J1R2"/>
<dbReference type="UniPathway" id="UPA00109">
    <property type="reaction ID" value="UER00187"/>
</dbReference>
<dbReference type="Proteomes" id="UP000001191">
    <property type="component" value="Chromosome"/>
</dbReference>
<dbReference type="GO" id="GO:0009986">
    <property type="term" value="C:cell surface"/>
    <property type="evidence" value="ECO:0007669"/>
    <property type="project" value="UniProtKB-SubCell"/>
</dbReference>
<dbReference type="GO" id="GO:0005576">
    <property type="term" value="C:extracellular region"/>
    <property type="evidence" value="ECO:0007669"/>
    <property type="project" value="UniProtKB-SubCell"/>
</dbReference>
<dbReference type="GO" id="GO:0000015">
    <property type="term" value="C:phosphopyruvate hydratase complex"/>
    <property type="evidence" value="ECO:0007669"/>
    <property type="project" value="InterPro"/>
</dbReference>
<dbReference type="GO" id="GO:0000287">
    <property type="term" value="F:magnesium ion binding"/>
    <property type="evidence" value="ECO:0007669"/>
    <property type="project" value="UniProtKB-UniRule"/>
</dbReference>
<dbReference type="GO" id="GO:0004634">
    <property type="term" value="F:phosphopyruvate hydratase activity"/>
    <property type="evidence" value="ECO:0007669"/>
    <property type="project" value="UniProtKB-UniRule"/>
</dbReference>
<dbReference type="GO" id="GO:0006096">
    <property type="term" value="P:glycolytic process"/>
    <property type="evidence" value="ECO:0007669"/>
    <property type="project" value="UniProtKB-UniRule"/>
</dbReference>
<dbReference type="CDD" id="cd03313">
    <property type="entry name" value="enolase"/>
    <property type="match status" value="1"/>
</dbReference>
<dbReference type="FunFam" id="3.20.20.120:FF:000001">
    <property type="entry name" value="Enolase"/>
    <property type="match status" value="1"/>
</dbReference>
<dbReference type="FunFam" id="3.30.390.10:FF:000001">
    <property type="entry name" value="Enolase"/>
    <property type="match status" value="1"/>
</dbReference>
<dbReference type="Gene3D" id="3.20.20.120">
    <property type="entry name" value="Enolase-like C-terminal domain"/>
    <property type="match status" value="1"/>
</dbReference>
<dbReference type="Gene3D" id="3.30.390.10">
    <property type="entry name" value="Enolase-like, N-terminal domain"/>
    <property type="match status" value="1"/>
</dbReference>
<dbReference type="HAMAP" id="MF_00318">
    <property type="entry name" value="Enolase"/>
    <property type="match status" value="1"/>
</dbReference>
<dbReference type="InterPro" id="IPR000941">
    <property type="entry name" value="Enolase"/>
</dbReference>
<dbReference type="InterPro" id="IPR036849">
    <property type="entry name" value="Enolase-like_C_sf"/>
</dbReference>
<dbReference type="InterPro" id="IPR029017">
    <property type="entry name" value="Enolase-like_N"/>
</dbReference>
<dbReference type="InterPro" id="IPR020810">
    <property type="entry name" value="Enolase_C"/>
</dbReference>
<dbReference type="InterPro" id="IPR020809">
    <property type="entry name" value="Enolase_CS"/>
</dbReference>
<dbReference type="InterPro" id="IPR020811">
    <property type="entry name" value="Enolase_N"/>
</dbReference>
<dbReference type="NCBIfam" id="TIGR01060">
    <property type="entry name" value="eno"/>
    <property type="match status" value="1"/>
</dbReference>
<dbReference type="PANTHER" id="PTHR11902">
    <property type="entry name" value="ENOLASE"/>
    <property type="match status" value="1"/>
</dbReference>
<dbReference type="PANTHER" id="PTHR11902:SF1">
    <property type="entry name" value="ENOLASE"/>
    <property type="match status" value="1"/>
</dbReference>
<dbReference type="Pfam" id="PF00113">
    <property type="entry name" value="Enolase_C"/>
    <property type="match status" value="1"/>
</dbReference>
<dbReference type="Pfam" id="PF03952">
    <property type="entry name" value="Enolase_N"/>
    <property type="match status" value="1"/>
</dbReference>
<dbReference type="PIRSF" id="PIRSF001400">
    <property type="entry name" value="Enolase"/>
    <property type="match status" value="1"/>
</dbReference>
<dbReference type="PRINTS" id="PR00148">
    <property type="entry name" value="ENOLASE"/>
</dbReference>
<dbReference type="SFLD" id="SFLDF00002">
    <property type="entry name" value="enolase"/>
    <property type="match status" value="1"/>
</dbReference>
<dbReference type="SFLD" id="SFLDG00178">
    <property type="entry name" value="enolase"/>
    <property type="match status" value="1"/>
</dbReference>
<dbReference type="SMART" id="SM01192">
    <property type="entry name" value="Enolase_C"/>
    <property type="match status" value="1"/>
</dbReference>
<dbReference type="SMART" id="SM01193">
    <property type="entry name" value="Enolase_N"/>
    <property type="match status" value="1"/>
</dbReference>
<dbReference type="SUPFAM" id="SSF51604">
    <property type="entry name" value="Enolase C-terminal domain-like"/>
    <property type="match status" value="1"/>
</dbReference>
<dbReference type="SUPFAM" id="SSF54826">
    <property type="entry name" value="Enolase N-terminal domain-like"/>
    <property type="match status" value="1"/>
</dbReference>
<dbReference type="PROSITE" id="PS00164">
    <property type="entry name" value="ENOLASE"/>
    <property type="match status" value="1"/>
</dbReference>
<sequence length="429" mass="45755">MSKFLDTAIEAIAAREILDSRGRPTIEAEVHLANGVVGLAQVPSGASTGSFEAHELRDGDKSRYGGKGVLKAVKNVKEALAPKLLGLDALNQELLDRTMIAIDGSPNKSSLGANAILGVSLAAAKAGAESLDIPLYRYLGGPLANLLPVPLMNVINGGAHASNNVDFQEFMIVPIGATSFREALRWGAEVFATLSQVLDEKGLLTGVGDEGGFAPNLESNQVALELLVAAIKKAGYKPGEEVALALDVAASEFYKNGQYVYDGKPHAPAEFIDYLGQLVDQYPIVSIEDGLHEEDWQSWQLLTQKLGSQVQLVGDDLFVTNATRLQRGIEEKAANAILIKLNQIGSLTETLETIDLATRNSIRSVISHRSGETEDTTIADLAVATRAGQIKTGSLCRSERVAKYNRLLRIEDELGDRAVYAGAVGLGPK</sequence>